<evidence type="ECO:0000255" key="1">
    <source>
        <dbReference type="HAMAP-Rule" id="MF_01458"/>
    </source>
</evidence>
<evidence type="ECO:0000256" key="2">
    <source>
        <dbReference type="SAM" id="MobiDB-lite"/>
    </source>
</evidence>
<comment type="function">
    <text evidence="1">Acts as a processive, ATP-dependent zinc metallopeptidase for both cytoplasmic and membrane proteins. Plays a role in the quality control of integral membrane proteins.</text>
</comment>
<comment type="cofactor">
    <cofactor evidence="1">
        <name>Zn(2+)</name>
        <dbReference type="ChEBI" id="CHEBI:29105"/>
    </cofactor>
    <text evidence="1">Binds 1 zinc ion per subunit.</text>
</comment>
<comment type="subunit">
    <text evidence="1">Homohexamer.</text>
</comment>
<comment type="subcellular location">
    <subcellularLocation>
        <location evidence="1">Cell membrane</location>
        <topology evidence="1">Multi-pass membrane protein</topology>
        <orientation evidence="1">Cytoplasmic side</orientation>
    </subcellularLocation>
</comment>
<comment type="similarity">
    <text evidence="1">In the central section; belongs to the AAA ATPase family.</text>
</comment>
<comment type="similarity">
    <text evidence="1">In the C-terminal section; belongs to the peptidase M41 family.</text>
</comment>
<organism>
    <name type="scientific">Veillonella parvula (strain ATCC 10790 / DSM 2008 / CCUG 5123 / JCM 12972 / NCTC 11810 / Te3)</name>
    <name type="common">Veillonella alcalescens</name>
    <dbReference type="NCBI Taxonomy" id="479436"/>
    <lineage>
        <taxon>Bacteria</taxon>
        <taxon>Bacillati</taxon>
        <taxon>Bacillota</taxon>
        <taxon>Negativicutes</taxon>
        <taxon>Veillonellales</taxon>
        <taxon>Veillonellaceae</taxon>
        <taxon>Veillonella</taxon>
    </lineage>
</organism>
<dbReference type="EC" id="3.4.24.-" evidence="1"/>
<dbReference type="EMBL" id="CP001820">
    <property type="protein sequence ID" value="ACZ24187.1"/>
    <property type="molecule type" value="Genomic_DNA"/>
</dbReference>
<dbReference type="RefSeq" id="WP_012864043.1">
    <property type="nucleotide sequence ID" value="NC_013520.1"/>
</dbReference>
<dbReference type="SMR" id="D1BLD0"/>
<dbReference type="PaxDb" id="479436-Vpar_0504"/>
<dbReference type="GeneID" id="69653051"/>
<dbReference type="KEGG" id="vpr:Vpar_0504"/>
<dbReference type="PATRIC" id="fig|479436.6.peg.491"/>
<dbReference type="eggNOG" id="COG0465">
    <property type="taxonomic scope" value="Bacteria"/>
</dbReference>
<dbReference type="HOGENOM" id="CLU_000688_16_0_9"/>
<dbReference type="OrthoDB" id="9809379at2"/>
<dbReference type="GO" id="GO:0005886">
    <property type="term" value="C:plasma membrane"/>
    <property type="evidence" value="ECO:0007669"/>
    <property type="project" value="UniProtKB-SubCell"/>
</dbReference>
<dbReference type="GO" id="GO:0005524">
    <property type="term" value="F:ATP binding"/>
    <property type="evidence" value="ECO:0007669"/>
    <property type="project" value="UniProtKB-UniRule"/>
</dbReference>
<dbReference type="GO" id="GO:0016887">
    <property type="term" value="F:ATP hydrolysis activity"/>
    <property type="evidence" value="ECO:0007669"/>
    <property type="project" value="UniProtKB-UniRule"/>
</dbReference>
<dbReference type="GO" id="GO:0004176">
    <property type="term" value="F:ATP-dependent peptidase activity"/>
    <property type="evidence" value="ECO:0007669"/>
    <property type="project" value="InterPro"/>
</dbReference>
<dbReference type="GO" id="GO:0004222">
    <property type="term" value="F:metalloendopeptidase activity"/>
    <property type="evidence" value="ECO:0007669"/>
    <property type="project" value="InterPro"/>
</dbReference>
<dbReference type="GO" id="GO:0008270">
    <property type="term" value="F:zinc ion binding"/>
    <property type="evidence" value="ECO:0007669"/>
    <property type="project" value="UniProtKB-UniRule"/>
</dbReference>
<dbReference type="GO" id="GO:0030163">
    <property type="term" value="P:protein catabolic process"/>
    <property type="evidence" value="ECO:0007669"/>
    <property type="project" value="UniProtKB-UniRule"/>
</dbReference>
<dbReference type="GO" id="GO:0006508">
    <property type="term" value="P:proteolysis"/>
    <property type="evidence" value="ECO:0007669"/>
    <property type="project" value="UniProtKB-KW"/>
</dbReference>
<dbReference type="CDD" id="cd19501">
    <property type="entry name" value="RecA-like_FtsH"/>
    <property type="match status" value="1"/>
</dbReference>
<dbReference type="FunFam" id="1.10.8.60:FF:000001">
    <property type="entry name" value="ATP-dependent zinc metalloprotease FtsH"/>
    <property type="match status" value="1"/>
</dbReference>
<dbReference type="FunFam" id="1.20.58.760:FF:000001">
    <property type="entry name" value="ATP-dependent zinc metalloprotease FtsH"/>
    <property type="match status" value="1"/>
</dbReference>
<dbReference type="FunFam" id="3.40.50.300:FF:000001">
    <property type="entry name" value="ATP-dependent zinc metalloprotease FtsH"/>
    <property type="match status" value="1"/>
</dbReference>
<dbReference type="Gene3D" id="1.10.8.60">
    <property type="match status" value="1"/>
</dbReference>
<dbReference type="Gene3D" id="3.30.720.210">
    <property type="match status" value="1"/>
</dbReference>
<dbReference type="Gene3D" id="3.40.50.300">
    <property type="entry name" value="P-loop containing nucleotide triphosphate hydrolases"/>
    <property type="match status" value="1"/>
</dbReference>
<dbReference type="Gene3D" id="1.20.58.760">
    <property type="entry name" value="Peptidase M41"/>
    <property type="match status" value="1"/>
</dbReference>
<dbReference type="HAMAP" id="MF_01458">
    <property type="entry name" value="FtsH"/>
    <property type="match status" value="1"/>
</dbReference>
<dbReference type="InterPro" id="IPR003593">
    <property type="entry name" value="AAA+_ATPase"/>
</dbReference>
<dbReference type="InterPro" id="IPR041569">
    <property type="entry name" value="AAA_lid_3"/>
</dbReference>
<dbReference type="InterPro" id="IPR003959">
    <property type="entry name" value="ATPase_AAA_core"/>
</dbReference>
<dbReference type="InterPro" id="IPR003960">
    <property type="entry name" value="ATPase_AAA_CS"/>
</dbReference>
<dbReference type="InterPro" id="IPR005936">
    <property type="entry name" value="FtsH"/>
</dbReference>
<dbReference type="InterPro" id="IPR027417">
    <property type="entry name" value="P-loop_NTPase"/>
</dbReference>
<dbReference type="InterPro" id="IPR011546">
    <property type="entry name" value="Pept_M41_FtsH_extracell"/>
</dbReference>
<dbReference type="InterPro" id="IPR000642">
    <property type="entry name" value="Peptidase_M41"/>
</dbReference>
<dbReference type="InterPro" id="IPR037219">
    <property type="entry name" value="Peptidase_M41-like"/>
</dbReference>
<dbReference type="NCBIfam" id="TIGR01241">
    <property type="entry name" value="FtsH_fam"/>
    <property type="match status" value="1"/>
</dbReference>
<dbReference type="PANTHER" id="PTHR23076:SF113">
    <property type="entry name" value="ATP-DEPENDENT ZINC METALLOPROTEASE FTSH 1, CHLOROPLASTIC-RELATED"/>
    <property type="match status" value="1"/>
</dbReference>
<dbReference type="PANTHER" id="PTHR23076">
    <property type="entry name" value="METALLOPROTEASE M41 FTSH"/>
    <property type="match status" value="1"/>
</dbReference>
<dbReference type="Pfam" id="PF00004">
    <property type="entry name" value="AAA"/>
    <property type="match status" value="1"/>
</dbReference>
<dbReference type="Pfam" id="PF17862">
    <property type="entry name" value="AAA_lid_3"/>
    <property type="match status" value="1"/>
</dbReference>
<dbReference type="Pfam" id="PF06480">
    <property type="entry name" value="FtsH_ext"/>
    <property type="match status" value="1"/>
</dbReference>
<dbReference type="Pfam" id="PF01434">
    <property type="entry name" value="Peptidase_M41"/>
    <property type="match status" value="1"/>
</dbReference>
<dbReference type="SMART" id="SM00382">
    <property type="entry name" value="AAA"/>
    <property type="match status" value="1"/>
</dbReference>
<dbReference type="SUPFAM" id="SSF140990">
    <property type="entry name" value="FtsH protease domain-like"/>
    <property type="match status" value="1"/>
</dbReference>
<dbReference type="SUPFAM" id="SSF52540">
    <property type="entry name" value="P-loop containing nucleoside triphosphate hydrolases"/>
    <property type="match status" value="1"/>
</dbReference>
<dbReference type="PROSITE" id="PS00674">
    <property type="entry name" value="AAA"/>
    <property type="match status" value="1"/>
</dbReference>
<gene>
    <name evidence="1" type="primary">ftsH</name>
    <name type="ordered locus">Vpar_0504</name>
</gene>
<protein>
    <recommendedName>
        <fullName evidence="1">ATP-dependent zinc metalloprotease FtsH</fullName>
        <ecNumber evidence="1">3.4.24.-</ecNumber>
    </recommendedName>
</protein>
<name>FTSH_VEIPT</name>
<accession>D1BLD0</accession>
<proteinExistence type="inferred from homology"/>
<sequence>MGRFTKNIVLYLLIIAAFVIAIDAFSGQSANKSELSYTGFIQQVQQKKVESVTITNDHGIKGKLKNGTEFNSYAPTDETLIKTLQDNGVEITAAPPEQPAWWMSLLGSAIPIIILVVLFFFIMQQTQGGGGRVMNFGKSRAKLMGEGNVKVSFKDVAGAEEAKQELEEVVEFLKDPGKFTTIGAKIPKGVLLAGPPGTGKTLLAKAVAGEAGVPFFTISGSDFVEMFVGVGASRVRDLFTQAKKNAPCIIFIDEIDAVGRQRGAGLGGGHDEREQTLNQLLVEMDGFGANEGIITIAATNRPDILDPALLRPGRFDRQVIVGRPDLRGREAILKVHARNKPLADDVDLKIIAKKTPGFTGADLSNLLNEAALLAARLNKKVITMAEVEEASEKVSMGPERRSHIVSDKDRKLTAYHESGHAIVAHLLPHADPVHKVTIIPRGAAGGYTMMLPTEEQNYKTKSQLLADIRVALGGRIAEALILDEISTGASGDLQSVTNTARAMVTRWGMSDELGPIVFGEQQEQIFLGKNLGHERNYSEEIAAKIDSEIHRIVEEAYKDVTKLLSDNEKFLHDMANALLEEETIDAKAVDNLYKYGTTKEPEAEEPKVASEADSSIVPEGVDAKKTTSTVADLSEASSNEIK</sequence>
<keyword id="KW-0067">ATP-binding</keyword>
<keyword id="KW-1003">Cell membrane</keyword>
<keyword id="KW-0378">Hydrolase</keyword>
<keyword id="KW-0472">Membrane</keyword>
<keyword id="KW-0479">Metal-binding</keyword>
<keyword id="KW-0482">Metalloprotease</keyword>
<keyword id="KW-0547">Nucleotide-binding</keyword>
<keyword id="KW-0645">Protease</keyword>
<keyword id="KW-0812">Transmembrane</keyword>
<keyword id="KW-1133">Transmembrane helix</keyword>
<keyword id="KW-0862">Zinc</keyword>
<feature type="chain" id="PRO_5000536918" description="ATP-dependent zinc metalloprotease FtsH">
    <location>
        <begin position="1"/>
        <end position="642"/>
    </location>
</feature>
<feature type="topological domain" description="Cytoplasmic" evidence="1">
    <location>
        <begin position="1"/>
        <end position="6"/>
    </location>
</feature>
<feature type="transmembrane region" description="Helical" evidence="1">
    <location>
        <begin position="7"/>
        <end position="27"/>
    </location>
</feature>
<feature type="topological domain" description="Extracellular" evidence="1">
    <location>
        <begin position="28"/>
        <end position="101"/>
    </location>
</feature>
<feature type="transmembrane region" description="Helical" evidence="1">
    <location>
        <begin position="102"/>
        <end position="122"/>
    </location>
</feature>
<feature type="topological domain" description="Cytoplasmic" evidence="1">
    <location>
        <begin position="123"/>
        <end position="642"/>
    </location>
</feature>
<feature type="region of interest" description="Disordered" evidence="2">
    <location>
        <begin position="597"/>
        <end position="642"/>
    </location>
</feature>
<feature type="compositionally biased region" description="Basic and acidic residues" evidence="2">
    <location>
        <begin position="597"/>
        <end position="610"/>
    </location>
</feature>
<feature type="compositionally biased region" description="Polar residues" evidence="2">
    <location>
        <begin position="626"/>
        <end position="642"/>
    </location>
</feature>
<feature type="active site" evidence="1">
    <location>
        <position position="417"/>
    </location>
</feature>
<feature type="binding site" evidence="1">
    <location>
        <begin position="194"/>
        <end position="201"/>
    </location>
    <ligand>
        <name>ATP</name>
        <dbReference type="ChEBI" id="CHEBI:30616"/>
    </ligand>
</feature>
<feature type="binding site" evidence="1">
    <location>
        <position position="416"/>
    </location>
    <ligand>
        <name>Zn(2+)</name>
        <dbReference type="ChEBI" id="CHEBI:29105"/>
        <note>catalytic</note>
    </ligand>
</feature>
<feature type="binding site" evidence="1">
    <location>
        <position position="420"/>
    </location>
    <ligand>
        <name>Zn(2+)</name>
        <dbReference type="ChEBI" id="CHEBI:29105"/>
        <note>catalytic</note>
    </ligand>
</feature>
<feature type="binding site" evidence="1">
    <location>
        <position position="492"/>
    </location>
    <ligand>
        <name>Zn(2+)</name>
        <dbReference type="ChEBI" id="CHEBI:29105"/>
        <note>catalytic</note>
    </ligand>
</feature>
<reference key="1">
    <citation type="submission" date="2009-11" db="EMBL/GenBank/DDBJ databases">
        <title>The complete genome of Veillonella parvula DSM 2008.</title>
        <authorList>
            <consortium name="US DOE Joint Genome Institute (JGI-PGF)"/>
            <person name="Lucas S."/>
            <person name="Copeland A."/>
            <person name="Lapidus A."/>
            <person name="Glavina del Rio T."/>
            <person name="Dalin E."/>
            <person name="Tice H."/>
            <person name="Bruce D."/>
            <person name="Goodwin L."/>
            <person name="Pitluck S."/>
            <person name="Kyrpides N."/>
            <person name="Mavromatis K."/>
            <person name="Ivanova N."/>
            <person name="Mikhailova N."/>
            <person name="Saunders E."/>
            <person name="Brettin T."/>
            <person name="Detter J.C."/>
            <person name="Han C."/>
            <person name="Larimer F."/>
            <person name="Land M."/>
            <person name="Hauser L."/>
            <person name="Markowitz V."/>
            <person name="Cheng J.F."/>
            <person name="Hugenholtz P."/>
            <person name="Woyke T."/>
            <person name="Wu D."/>
            <person name="Wellnitz S."/>
            <person name="Schneider S."/>
            <person name="Gronow S."/>
            <person name="Klenk H.P."/>
            <person name="Eisen J.A."/>
        </authorList>
    </citation>
    <scope>NUCLEOTIDE SEQUENCE [LARGE SCALE GENOMIC DNA]</scope>
    <source>
        <strain>ATCC 10790 / DSM 2008 / CCUG 5123 / JCM 12972 / NCTC 11810 / Te3</strain>
    </source>
</reference>